<sequence>MDIKQLREKSADELKAHLTDLRKEQFSLRMQQVTGQLPKTHETRRVRREIARVKHLLGSTK</sequence>
<accession>B2SQR8</accession>
<proteinExistence type="inferred from homology"/>
<feature type="chain" id="PRO_1000121840" description="Large ribosomal subunit protein uL29">
    <location>
        <begin position="1"/>
        <end position="61"/>
    </location>
</feature>
<dbReference type="EMBL" id="CP000967">
    <property type="protein sequence ID" value="ACD57895.1"/>
    <property type="molecule type" value="Genomic_DNA"/>
</dbReference>
<dbReference type="RefSeq" id="WP_003486703.1">
    <property type="nucleotide sequence ID" value="NC_010717.2"/>
</dbReference>
<dbReference type="SMR" id="B2SQR8"/>
<dbReference type="GeneID" id="97509344"/>
<dbReference type="KEGG" id="xop:PXO_04513"/>
<dbReference type="eggNOG" id="COG0255">
    <property type="taxonomic scope" value="Bacteria"/>
</dbReference>
<dbReference type="HOGENOM" id="CLU_158491_1_2_6"/>
<dbReference type="Proteomes" id="UP000001740">
    <property type="component" value="Chromosome"/>
</dbReference>
<dbReference type="GO" id="GO:0022625">
    <property type="term" value="C:cytosolic large ribosomal subunit"/>
    <property type="evidence" value="ECO:0007669"/>
    <property type="project" value="TreeGrafter"/>
</dbReference>
<dbReference type="GO" id="GO:0003735">
    <property type="term" value="F:structural constituent of ribosome"/>
    <property type="evidence" value="ECO:0007669"/>
    <property type="project" value="InterPro"/>
</dbReference>
<dbReference type="GO" id="GO:0006412">
    <property type="term" value="P:translation"/>
    <property type="evidence" value="ECO:0007669"/>
    <property type="project" value="UniProtKB-UniRule"/>
</dbReference>
<dbReference type="CDD" id="cd00427">
    <property type="entry name" value="Ribosomal_L29_HIP"/>
    <property type="match status" value="1"/>
</dbReference>
<dbReference type="FunFam" id="1.10.287.310:FF:000001">
    <property type="entry name" value="50S ribosomal protein L29"/>
    <property type="match status" value="1"/>
</dbReference>
<dbReference type="Gene3D" id="1.10.287.310">
    <property type="match status" value="1"/>
</dbReference>
<dbReference type="HAMAP" id="MF_00374">
    <property type="entry name" value="Ribosomal_uL29"/>
    <property type="match status" value="1"/>
</dbReference>
<dbReference type="InterPro" id="IPR050063">
    <property type="entry name" value="Ribosomal_protein_uL29"/>
</dbReference>
<dbReference type="InterPro" id="IPR001854">
    <property type="entry name" value="Ribosomal_uL29"/>
</dbReference>
<dbReference type="InterPro" id="IPR036049">
    <property type="entry name" value="Ribosomal_uL29_sf"/>
</dbReference>
<dbReference type="NCBIfam" id="TIGR00012">
    <property type="entry name" value="L29"/>
    <property type="match status" value="1"/>
</dbReference>
<dbReference type="PANTHER" id="PTHR10916">
    <property type="entry name" value="60S RIBOSOMAL PROTEIN L35/50S RIBOSOMAL PROTEIN L29"/>
    <property type="match status" value="1"/>
</dbReference>
<dbReference type="PANTHER" id="PTHR10916:SF0">
    <property type="entry name" value="LARGE RIBOSOMAL SUBUNIT PROTEIN UL29C"/>
    <property type="match status" value="1"/>
</dbReference>
<dbReference type="Pfam" id="PF00831">
    <property type="entry name" value="Ribosomal_L29"/>
    <property type="match status" value="1"/>
</dbReference>
<dbReference type="SUPFAM" id="SSF46561">
    <property type="entry name" value="Ribosomal protein L29 (L29p)"/>
    <property type="match status" value="1"/>
</dbReference>
<comment type="similarity">
    <text evidence="1">Belongs to the universal ribosomal protein uL29 family.</text>
</comment>
<evidence type="ECO:0000255" key="1">
    <source>
        <dbReference type="HAMAP-Rule" id="MF_00374"/>
    </source>
</evidence>
<evidence type="ECO:0000305" key="2"/>
<name>RL29_XANOP</name>
<organism>
    <name type="scientific">Xanthomonas oryzae pv. oryzae (strain PXO99A)</name>
    <dbReference type="NCBI Taxonomy" id="360094"/>
    <lineage>
        <taxon>Bacteria</taxon>
        <taxon>Pseudomonadati</taxon>
        <taxon>Pseudomonadota</taxon>
        <taxon>Gammaproteobacteria</taxon>
        <taxon>Lysobacterales</taxon>
        <taxon>Lysobacteraceae</taxon>
        <taxon>Xanthomonas</taxon>
    </lineage>
</organism>
<reference key="1">
    <citation type="journal article" date="2008" name="BMC Genomics">
        <title>Genome sequence and rapid evolution of the rice pathogen Xanthomonas oryzae pv. oryzae PXO99A.</title>
        <authorList>
            <person name="Salzberg S.L."/>
            <person name="Sommer D.D."/>
            <person name="Schatz M.C."/>
            <person name="Phillippy A.M."/>
            <person name="Rabinowicz P.D."/>
            <person name="Tsuge S."/>
            <person name="Furutani A."/>
            <person name="Ochiai H."/>
            <person name="Delcher A.L."/>
            <person name="Kelley D."/>
            <person name="Madupu R."/>
            <person name="Puiu D."/>
            <person name="Radune D."/>
            <person name="Shumway M."/>
            <person name="Trapnell C."/>
            <person name="Aparna G."/>
            <person name="Jha G."/>
            <person name="Pandey A."/>
            <person name="Patil P.B."/>
            <person name="Ishihara H."/>
            <person name="Meyer D.F."/>
            <person name="Szurek B."/>
            <person name="Verdier V."/>
            <person name="Koebnik R."/>
            <person name="Dow J.M."/>
            <person name="Ryan R.P."/>
            <person name="Hirata H."/>
            <person name="Tsuyumu S."/>
            <person name="Won Lee S."/>
            <person name="Seo Y.-S."/>
            <person name="Sriariyanum M."/>
            <person name="Ronald P.C."/>
            <person name="Sonti R.V."/>
            <person name="Van Sluys M.-A."/>
            <person name="Leach J.E."/>
            <person name="White F.F."/>
            <person name="Bogdanove A.J."/>
        </authorList>
    </citation>
    <scope>NUCLEOTIDE SEQUENCE [LARGE SCALE GENOMIC DNA]</scope>
    <source>
        <strain>PXO99A</strain>
    </source>
</reference>
<protein>
    <recommendedName>
        <fullName evidence="1">Large ribosomal subunit protein uL29</fullName>
    </recommendedName>
    <alternativeName>
        <fullName evidence="2">50S ribosomal protein L29</fullName>
    </alternativeName>
</protein>
<keyword id="KW-0687">Ribonucleoprotein</keyword>
<keyword id="KW-0689">Ribosomal protein</keyword>
<gene>
    <name evidence="1" type="primary">rpmC</name>
    <name type="ordered locus">PXO_04513</name>
</gene>